<keyword id="KW-0238">DNA-binding</keyword>
<keyword id="KW-1017">Isopeptide bond</keyword>
<keyword id="KW-0479">Metal-binding</keyword>
<keyword id="KW-0488">Methylation</keyword>
<keyword id="KW-0539">Nucleus</keyword>
<keyword id="KW-0597">Phosphoprotein</keyword>
<keyword id="KW-1185">Reference proteome</keyword>
<keyword id="KW-0677">Repeat</keyword>
<keyword id="KW-0804">Transcription</keyword>
<keyword id="KW-0805">Transcription regulation</keyword>
<keyword id="KW-0808">Transferase</keyword>
<keyword id="KW-0832">Ubl conjugation</keyword>
<keyword id="KW-0833">Ubl conjugation pathway</keyword>
<keyword id="KW-0862">Zinc</keyword>
<keyword id="KW-0863">Zinc-finger</keyword>
<name>ZN451_MOUSE</name>
<accession>Q8C0P7</accession>
<feature type="chain" id="PRO_0000047599" description="E3 SUMO-protein ligase ZNF451">
    <location>
        <begin position="1"/>
        <end position="1056"/>
    </location>
</feature>
<feature type="zinc finger region" description="C2H2-type 1" evidence="2">
    <location>
        <begin position="169"/>
        <end position="195"/>
    </location>
</feature>
<feature type="zinc finger region" description="C2H2-type 2; degenerate" evidence="2">
    <location>
        <begin position="212"/>
        <end position="234"/>
    </location>
</feature>
<feature type="zinc finger region" description="C2H2-type 3" evidence="2">
    <location>
        <begin position="253"/>
        <end position="277"/>
    </location>
</feature>
<feature type="zinc finger region" description="C2H2-type 4; atypical" evidence="2">
    <location>
        <begin position="315"/>
        <end position="338"/>
    </location>
</feature>
<feature type="zinc finger region" description="C2H2-type 5" evidence="2">
    <location>
        <begin position="362"/>
        <end position="385"/>
    </location>
</feature>
<feature type="zinc finger region" description="C2H2-type 6" evidence="2">
    <location>
        <begin position="494"/>
        <end position="517"/>
    </location>
</feature>
<feature type="zinc finger region" description="C2H2-type 7" evidence="2">
    <location>
        <begin position="527"/>
        <end position="550"/>
    </location>
</feature>
<feature type="zinc finger region" description="C2H2-type 8; atypical" evidence="2">
    <location>
        <begin position="604"/>
        <end position="629"/>
    </location>
</feature>
<feature type="zinc finger region" description="C2H2-type 9" evidence="2">
    <location>
        <begin position="634"/>
        <end position="657"/>
    </location>
</feature>
<feature type="zinc finger region" description="C2H2-type 10" evidence="2">
    <location>
        <begin position="665"/>
        <end position="688"/>
    </location>
</feature>
<feature type="zinc finger region" description="C2H2-type 11" evidence="2">
    <location>
        <begin position="751"/>
        <end position="774"/>
    </location>
</feature>
<feature type="zinc finger region" description="C2H2-type 12" evidence="2">
    <location>
        <begin position="787"/>
        <end position="810"/>
    </location>
</feature>
<feature type="region of interest" description="Important for interaction with SUMO1 and SUMO2" evidence="1">
    <location>
        <begin position="1"/>
        <end position="344"/>
    </location>
</feature>
<feature type="region of interest" description="Sufficient for E3 SUMO-protein ligase activity" evidence="1">
    <location>
        <begin position="1"/>
        <end position="246"/>
    </location>
</feature>
<feature type="region of interest" description="Disordered" evidence="3">
    <location>
        <begin position="1"/>
        <end position="39"/>
    </location>
</feature>
<feature type="region of interest" description="Interaction with SUMO2 1" evidence="1">
    <location>
        <begin position="30"/>
        <end position="37"/>
    </location>
</feature>
<feature type="region of interest" description="Interaction with SUMO2 2" evidence="1">
    <location>
        <begin position="42"/>
        <end position="50"/>
    </location>
</feature>
<feature type="region of interest" description="Important for interaction with SMAD4" evidence="1">
    <location>
        <begin position="168"/>
        <end position="521"/>
    </location>
</feature>
<feature type="region of interest" description="Disordered" evidence="3">
    <location>
        <begin position="806"/>
        <end position="830"/>
    </location>
</feature>
<feature type="region of interest" description="Disordered" evidence="3">
    <location>
        <begin position="839"/>
        <end position="858"/>
    </location>
</feature>
<feature type="region of interest" description="Disordered" evidence="3">
    <location>
        <begin position="1019"/>
        <end position="1045"/>
    </location>
</feature>
<feature type="region of interest" description="Important for ubiquitin binding" evidence="1">
    <location>
        <begin position="1045"/>
        <end position="1056"/>
    </location>
</feature>
<feature type="short sequence motif" description="PLRP" evidence="5">
    <location>
        <begin position="38"/>
        <end position="41"/>
    </location>
</feature>
<feature type="compositionally biased region" description="Basic and acidic residues" evidence="3">
    <location>
        <begin position="849"/>
        <end position="858"/>
    </location>
</feature>
<feature type="compositionally biased region" description="Basic and acidic residues" evidence="3">
    <location>
        <begin position="1033"/>
        <end position="1045"/>
    </location>
</feature>
<feature type="modified residue" description="Phosphoserine" evidence="1">
    <location>
        <position position="155"/>
    </location>
</feature>
<feature type="modified residue" description="Omega-N-methylarginine" evidence="1">
    <location>
        <position position="158"/>
    </location>
</feature>
<feature type="modified residue" description="Phosphoserine" evidence="1">
    <location>
        <position position="429"/>
    </location>
</feature>
<feature type="cross-link" description="Glycyl lysine isopeptide (Lys-Gly) (interchain with G-Cter in SUMO2)" evidence="1">
    <location>
        <position position="75"/>
    </location>
</feature>
<feature type="cross-link" description="Glycyl lysine isopeptide (Lys-Gly) (interchain with G-Cter in SUMO2)" evidence="1">
    <location>
        <position position="77"/>
    </location>
</feature>
<feature type="cross-link" description="Glycyl lysine isopeptide (Lys-Gly) (interchain with G-Cter in SUMO2)" evidence="1">
    <location>
        <position position="106"/>
    </location>
</feature>
<feature type="cross-link" description="Glycyl lysine isopeptide (Lys-Gly) (interchain with G-Cter in SUMO2)" evidence="1">
    <location>
        <position position="139"/>
    </location>
</feature>
<feature type="cross-link" description="Glycyl lysine isopeptide (Lys-Gly) (interchain with G-Cter in SUMO2)" evidence="1">
    <location>
        <position position="153"/>
    </location>
</feature>
<feature type="cross-link" description="Glycyl lysine isopeptide (Lys-Gly) (interchain with G-Cter in SUMO2)" evidence="1">
    <location>
        <position position="167"/>
    </location>
</feature>
<feature type="cross-link" description="Glycyl lysine isopeptide (Lys-Gly) (interchain with G-Cter in SUMO2)" evidence="1">
    <location>
        <position position="270"/>
    </location>
</feature>
<feature type="cross-link" description="Glycyl lysine isopeptide (Lys-Gly) (interchain with G-Cter in SUMO2)" evidence="1">
    <location>
        <position position="275"/>
    </location>
</feature>
<feature type="cross-link" description="Glycyl lysine isopeptide (Lys-Gly) (interchain with G-Cter in SUMO2)" evidence="1">
    <location>
        <position position="283"/>
    </location>
</feature>
<feature type="cross-link" description="Glycyl lysine isopeptide (Lys-Gly) (interchain with G-Cter in SUMO2)" evidence="1">
    <location>
        <position position="288"/>
    </location>
</feature>
<feature type="cross-link" description="Glycyl lysine isopeptide (Lys-Gly) (interchain with G-Cter in SUMO2)" evidence="1">
    <location>
        <position position="301"/>
    </location>
</feature>
<feature type="cross-link" description="Glycyl lysine isopeptide (Lys-Gly) (interchain with G-Cter in SUMO2)" evidence="1">
    <location>
        <position position="309"/>
    </location>
</feature>
<feature type="cross-link" description="Glycyl lysine isopeptide (Lys-Gly) (interchain with G-Cter in SUMO2)" evidence="1">
    <location>
        <position position="420"/>
    </location>
</feature>
<feature type="cross-link" description="Glycyl lysine isopeptide (Lys-Gly) (interchain with G-Cter in SUMO2)" evidence="1">
    <location>
        <position position="431"/>
    </location>
</feature>
<feature type="cross-link" description="Glycyl lysine isopeptide (Lys-Gly) (interchain with G-Cter in SUMO2)" evidence="1">
    <location>
        <position position="539"/>
    </location>
</feature>
<feature type="cross-link" description="Glycyl lysine isopeptide (Lys-Gly) (interchain with G-Cter in SUMO2)" evidence="1">
    <location>
        <position position="583"/>
    </location>
</feature>
<feature type="cross-link" description="Glycyl lysine isopeptide (Lys-Gly) (interchain with G-Cter in SUMO2)" evidence="1">
    <location>
        <position position="645"/>
    </location>
</feature>
<feature type="cross-link" description="Glycyl lysine isopeptide (Lys-Gly) (interchain with G-Cter in SUMO1); alternate" evidence="1">
    <location>
        <position position="704"/>
    </location>
</feature>
<feature type="cross-link" description="Glycyl lysine isopeptide (Lys-Gly) (interchain with G-Cter in SUMO2); alternate" evidence="1">
    <location>
        <position position="704"/>
    </location>
</feature>
<feature type="cross-link" description="Glycyl lysine isopeptide (Lys-Gly) (interchain with G-Cter in SUMO2)" evidence="1">
    <location>
        <position position="729"/>
    </location>
</feature>
<feature type="cross-link" description="Glycyl lysine isopeptide (Lys-Gly) (interchain with G-Cter in SUMO2)" evidence="1">
    <location>
        <position position="746"/>
    </location>
</feature>
<feature type="cross-link" description="Glycyl lysine isopeptide (Lys-Gly) (interchain with G-Cter in SUMO2)" evidence="1">
    <location>
        <position position="788"/>
    </location>
</feature>
<feature type="cross-link" description="Glycyl lysine isopeptide (Lys-Gly) (interchain with G-Cter in SUMO2)" evidence="1">
    <location>
        <position position="815"/>
    </location>
</feature>
<feature type="cross-link" description="Glycyl lysine isopeptide (Lys-Gly) (interchain with G-Cter in SUMO2)" evidence="1">
    <location>
        <position position="843"/>
    </location>
</feature>
<feature type="cross-link" description="Glycyl lysine isopeptide (Lys-Gly) (interchain with G-Cter in SUMO2)" evidence="1">
    <location>
        <position position="849"/>
    </location>
</feature>
<feature type="cross-link" description="Glycyl lysine isopeptide (Lys-Gly) (interchain with G-Cter in SUMO2)" evidence="1">
    <location>
        <position position="947"/>
    </location>
</feature>
<feature type="cross-link" description="Glycyl lysine isopeptide (Lys-Gly) (interchain with G-Cter in SUMO2)" evidence="1">
    <location>
        <position position="988"/>
    </location>
</feature>
<feature type="cross-link" description="Glycyl lysine isopeptide (Lys-Gly) (interchain with G-Cter in SUMO2)" evidence="1">
    <location>
        <position position="989"/>
    </location>
</feature>
<dbReference type="EC" id="2.3.2.-" evidence="4"/>
<dbReference type="EMBL" id="AK030088">
    <property type="protein sequence ID" value="BAC26778.1"/>
    <property type="molecule type" value="mRNA"/>
</dbReference>
<dbReference type="CCDS" id="CCDS14865.1"/>
<dbReference type="RefSeq" id="NP_001277628.1">
    <property type="nucleotide sequence ID" value="NM_001290699.1"/>
</dbReference>
<dbReference type="RefSeq" id="NP_598578.1">
    <property type="nucleotide sequence ID" value="NM_133817.3"/>
</dbReference>
<dbReference type="BioGRID" id="221052">
    <property type="interactions" value="4"/>
</dbReference>
<dbReference type="FunCoup" id="Q8C0P7">
    <property type="interactions" value="3751"/>
</dbReference>
<dbReference type="STRING" id="10090.ENSMUSP00000019861"/>
<dbReference type="GlyGen" id="Q8C0P7">
    <property type="glycosylation" value="1 site"/>
</dbReference>
<dbReference type="iPTMnet" id="Q8C0P7"/>
<dbReference type="PhosphoSitePlus" id="Q8C0P7"/>
<dbReference type="PaxDb" id="10090-ENSMUSP00000019861"/>
<dbReference type="ProteomicsDB" id="275078"/>
<dbReference type="Antibodypedia" id="2845">
    <property type="antibodies" value="87 antibodies from 21 providers"/>
</dbReference>
<dbReference type="Ensembl" id="ENSMUST00000019861.13">
    <property type="protein sequence ID" value="ENSMUSP00000019861.7"/>
    <property type="gene ID" value="ENSMUSG00000042197.14"/>
</dbReference>
<dbReference type="GeneID" id="98403"/>
<dbReference type="KEGG" id="mmu:98403"/>
<dbReference type="UCSC" id="uc007anz.2">
    <property type="organism name" value="mouse"/>
</dbReference>
<dbReference type="AGR" id="MGI:2137896"/>
<dbReference type="CTD" id="98403"/>
<dbReference type="MGI" id="MGI:2137896">
    <property type="gene designation" value="Zfp451"/>
</dbReference>
<dbReference type="VEuPathDB" id="HostDB:ENSMUSG00000042197"/>
<dbReference type="eggNOG" id="KOG1721">
    <property type="taxonomic scope" value="Eukaryota"/>
</dbReference>
<dbReference type="GeneTree" id="ENSGT00390000011354"/>
<dbReference type="HOGENOM" id="CLU_010658_0_0_1"/>
<dbReference type="InParanoid" id="Q8C0P7"/>
<dbReference type="OMA" id="RCSLCHQ"/>
<dbReference type="OrthoDB" id="6091938at2759"/>
<dbReference type="PhylomeDB" id="Q8C0P7"/>
<dbReference type="TreeFam" id="TF331947"/>
<dbReference type="UniPathway" id="UPA00886"/>
<dbReference type="BioGRID-ORCS" id="98403">
    <property type="hits" value="5 hits in 77 CRISPR screens"/>
</dbReference>
<dbReference type="ChiTaRS" id="Zfp451">
    <property type="organism name" value="mouse"/>
</dbReference>
<dbReference type="PRO" id="PR:Q8C0P7"/>
<dbReference type="Proteomes" id="UP000000589">
    <property type="component" value="Chromosome 1"/>
</dbReference>
<dbReference type="RNAct" id="Q8C0P7">
    <property type="molecule type" value="protein"/>
</dbReference>
<dbReference type="Bgee" id="ENSMUSG00000042197">
    <property type="expression patterns" value="Expressed in spermatid and 249 other cell types or tissues"/>
</dbReference>
<dbReference type="ExpressionAtlas" id="Q8C0P7">
    <property type="expression patterns" value="baseline and differential"/>
</dbReference>
<dbReference type="GO" id="GO:0005634">
    <property type="term" value="C:nucleus"/>
    <property type="evidence" value="ECO:0000250"/>
    <property type="project" value="UniProtKB"/>
</dbReference>
<dbReference type="GO" id="GO:0016605">
    <property type="term" value="C:PML body"/>
    <property type="evidence" value="ECO:0007669"/>
    <property type="project" value="UniProtKB-SubCell"/>
</dbReference>
<dbReference type="GO" id="GO:0003677">
    <property type="term" value="F:DNA binding"/>
    <property type="evidence" value="ECO:0007669"/>
    <property type="project" value="UniProtKB-KW"/>
</dbReference>
<dbReference type="GO" id="GO:0061665">
    <property type="term" value="F:SUMO ligase activity"/>
    <property type="evidence" value="ECO:0000250"/>
    <property type="project" value="UniProtKB"/>
</dbReference>
<dbReference type="GO" id="GO:0003714">
    <property type="term" value="F:transcription corepressor activity"/>
    <property type="evidence" value="ECO:0000250"/>
    <property type="project" value="UniProtKB"/>
</dbReference>
<dbReference type="GO" id="GO:0140416">
    <property type="term" value="F:transcription regulator inhibitor activity"/>
    <property type="evidence" value="ECO:0007669"/>
    <property type="project" value="Ensembl"/>
</dbReference>
<dbReference type="GO" id="GO:0008270">
    <property type="term" value="F:zinc ion binding"/>
    <property type="evidence" value="ECO:0007669"/>
    <property type="project" value="UniProtKB-KW"/>
</dbReference>
<dbReference type="GO" id="GO:0060633">
    <property type="term" value="P:negative regulation of transcription initiation by RNA polymerase II"/>
    <property type="evidence" value="ECO:0000250"/>
    <property type="project" value="UniProtKB"/>
</dbReference>
<dbReference type="GO" id="GO:0030512">
    <property type="term" value="P:negative regulation of transforming growth factor beta receptor signaling pathway"/>
    <property type="evidence" value="ECO:0000250"/>
    <property type="project" value="UniProtKB"/>
</dbReference>
<dbReference type="GO" id="GO:0016925">
    <property type="term" value="P:protein sumoylation"/>
    <property type="evidence" value="ECO:0000250"/>
    <property type="project" value="UniProtKB"/>
</dbReference>
<dbReference type="CDD" id="cd18721">
    <property type="entry name" value="PIN_ZNF451-like"/>
    <property type="match status" value="1"/>
</dbReference>
<dbReference type="FunFam" id="3.30.160.60:FF:000836">
    <property type="entry name" value="E3 SUMO-protein ligase ZNF451 isoform X1"/>
    <property type="match status" value="1"/>
</dbReference>
<dbReference type="Gene3D" id="3.30.160.60">
    <property type="entry name" value="Classic Zinc Finger"/>
    <property type="match status" value="3"/>
</dbReference>
<dbReference type="InterPro" id="IPR041192">
    <property type="entry name" value="PIN_11"/>
</dbReference>
<dbReference type="InterPro" id="IPR013087">
    <property type="entry name" value="Znf_C2H2_type"/>
</dbReference>
<dbReference type="PANTHER" id="PTHR24408:SF61">
    <property type="entry name" value="E3 SUMO-PROTEIN LIGASE ZNF451"/>
    <property type="match status" value="1"/>
</dbReference>
<dbReference type="PANTHER" id="PTHR24408">
    <property type="entry name" value="ZINC FINGER PROTEIN"/>
    <property type="match status" value="1"/>
</dbReference>
<dbReference type="Pfam" id="PF18479">
    <property type="entry name" value="PIN_11"/>
    <property type="match status" value="1"/>
</dbReference>
<dbReference type="Pfam" id="PF23108">
    <property type="entry name" value="Zf-C2H2_ZNF451"/>
    <property type="match status" value="1"/>
</dbReference>
<dbReference type="Pfam" id="PF23101">
    <property type="entry name" value="Zf-C2H2_ZNF451_1st"/>
    <property type="match status" value="1"/>
</dbReference>
<dbReference type="Pfam" id="PF23102">
    <property type="entry name" value="Zf-C2H2_ZNF451_2nd"/>
    <property type="match status" value="1"/>
</dbReference>
<dbReference type="Pfam" id="PF23103">
    <property type="entry name" value="Zf-C2H2_ZNF451_5th"/>
    <property type="match status" value="1"/>
</dbReference>
<dbReference type="Pfam" id="PF23104">
    <property type="entry name" value="Zf-C2H2_ZNF451_6th"/>
    <property type="match status" value="1"/>
</dbReference>
<dbReference type="Pfam" id="PF23107">
    <property type="entry name" value="Zf-C2H2_ZNF451_C"/>
    <property type="match status" value="1"/>
</dbReference>
<dbReference type="SMART" id="SM00355">
    <property type="entry name" value="ZnF_C2H2"/>
    <property type="match status" value="12"/>
</dbReference>
<dbReference type="PROSITE" id="PS00028">
    <property type="entry name" value="ZINC_FINGER_C2H2_1"/>
    <property type="match status" value="8"/>
</dbReference>
<dbReference type="PROSITE" id="PS50157">
    <property type="entry name" value="ZINC_FINGER_C2H2_2"/>
    <property type="match status" value="5"/>
</dbReference>
<sequence length="1056" mass="120070">MGDPGPEIIESVPPAGPEASESTTDENEDDIQFVSEGPLRPVLEYIDLVSSDDEEPSTSHSDENFKCKDYIDHQKDKVALTLARLARHVEVEKQQKEEKNRAFREKIDFQHAHGLQELEFIQGHSETEAARQCVDQWLKMPGLRTNAANSGTKRSFQRGGRMWRSEKPILCPIMHCNKEFDNGHLLLGHLKRFDHSPCDPTITLHGPLANSFACAVCYEHFVTQQQYKDHLLSRTAAADGHSNSLLPQIIQCYACPQCFLLFSTKDECLKHMSTKNHFHQSFKLSDNKGTARPISFPSFAKKRLVSLCKDVPFQVKCVACHQTLRSHMELTAHFRVRCQNAGPVAIAEKSITQVAKEFIVRGYCSDCNQVFMDVASTQSHKNSGHKITLANSVEESVLLYCHISEGSRPPCDLHLFSQPKISSLKRILSVKESSAEDCIVPTKKVNLGVESLGGATRVQRQSPAVTAWFCECRRQFPSEEAVEKHVFSANTMCYKCVVCGKVCEDSGVMRLHMSRFHGGAHLNNFLFWCRTCKKELVKKDAIMAHITEFHSGHRYFYEMDEVEEEEEEAMPSSSVESHLNTDKPPSPIAVVDHCPANSPPRGRWQCRICEDMFESQECVKQHCMSLTSHRFHRYSCAHCRKTFHKVETLYRHCQDEHDSEIMMKYFCGLCDLIFNKEEEFLSHYKEHHSIDYVFVSEKTKTSIKTEGDFKIVETSSLLSCGCHESYMCKINRKEDYDRCLPVLLEKGRLWFRCSSCSATAQNVTDINTHVCQVHRKEKSEEEQQYVIKCGICTKAFQNTESAQQHFHRKHAALQKPTATPGGANRSSTCQLAASASHAEKNLKQPSSQKHSDVEKGAEHDVRCQNIEEEVELPDVDYLRTMTHIVFVDFDNWSNFFGHLPGHLNQGTFIWGFQGGNTNWKPPLSCKVYNYLSRIGCFFLHPRCSKRKDAADFAICMHAGRLDEQLPKQIPFTILSGDQGFLELENQFKKTQRPAHILNPHHLEGDMMCALLNSISDTTKECDSDDSSGMKGSPAEELRATEDVELEEAIRRSLEEM</sequence>
<protein>
    <recommendedName>
        <fullName evidence="6">E3 SUMO-protein ligase ZNF451</fullName>
        <ecNumber evidence="4">2.3.2.-</ecNumber>
    </recommendedName>
    <alternativeName>
        <fullName evidence="5">E3 SUMO-protein transferase ZNF451</fullName>
    </alternativeName>
    <alternativeName>
        <fullName>Zinc finger protein 451</fullName>
    </alternativeName>
</protein>
<proteinExistence type="evidence at protein level"/>
<organism>
    <name type="scientific">Mus musculus</name>
    <name type="common">Mouse</name>
    <dbReference type="NCBI Taxonomy" id="10090"/>
    <lineage>
        <taxon>Eukaryota</taxon>
        <taxon>Metazoa</taxon>
        <taxon>Chordata</taxon>
        <taxon>Craniata</taxon>
        <taxon>Vertebrata</taxon>
        <taxon>Euteleostomi</taxon>
        <taxon>Mammalia</taxon>
        <taxon>Eutheria</taxon>
        <taxon>Euarchontoglires</taxon>
        <taxon>Glires</taxon>
        <taxon>Rodentia</taxon>
        <taxon>Myomorpha</taxon>
        <taxon>Muroidea</taxon>
        <taxon>Muridae</taxon>
        <taxon>Murinae</taxon>
        <taxon>Mus</taxon>
        <taxon>Mus</taxon>
    </lineage>
</organism>
<comment type="function">
    <text evidence="1 4">E3 SUMO-protein ligase; has a preference for SUMO2 and SUMO3 and facilitates UBE2I/UBC9-mediated sumoylation of target proteins. Plays a role in protein SUMO2 modification in response to stress caused by DNA damage and by proteasome inhibitors (in vitro). Required for MCM4 sumoylation. Has no activity with SUMO1 (PubMed:26524493). Preferentially transfers an additional SUMO2 chain onto the SUMO2 consensus site 'Lys-11'. Negatively regulates transcriptional activation mediated by the SMAD4 complex in response to TGF-beta signaling. Inhibits EP300-mediated acetylation of histone H3 at 'Lys-9'. Plays a role in regulating the transcription of AR targets (By similarity).</text>
</comment>
<comment type="pathway">
    <text evidence="4">Protein modification; protein sumoylation.</text>
</comment>
<comment type="subunit">
    <text evidence="1">Homooligomer. Interacts (via N-terminal region) with SUMO1. Interacts (via N-terminal region) with SUMO2. Interacts simultaneously with two SUMO2 chains. Identified in a complex with SUMO2 and UBE2I/UBC9, where one ZNF451 interacts with one UBE2I/UBC9 and two SUMO2 chains, one bound to the UBE2I/UBC9 active site and the other to another region of the same UBE2I/UBC9 molecule. Interacts (via C-terminus) with ubiquitin. Interacts (via N-terminal zinc-finger domains) with SMAD4 (via MH2 domain). Interacts with SMAD2 and SMAD3. Identified in a complex that contains at least ZNF451, SMAD2, SMAD3 and SMAD4. Interacts with EP300. Inhibits interaction between EP300 and the SMAD4 complex. Interacts with SIMC1.</text>
</comment>
<comment type="subcellular location">
    <subcellularLocation>
        <location evidence="1">Nucleus</location>
    </subcellularLocation>
    <subcellularLocation>
        <location evidence="1">Nucleus</location>
        <location evidence="1">PML body</location>
    </subcellularLocation>
    <subcellularLocation>
        <location evidence="1">Nucleus</location>
        <location evidence="1">Nucleoplasm</location>
    </subcellularLocation>
    <text evidence="1">Colocalizes with UBE2I/UBC9, SUMO1 and SUMO2 in nuclear granules; this probably requires sumoylation. Desumoylation leads to diffuse nucleoplasmic location.</text>
</comment>
<comment type="domain">
    <text evidence="1">Binds UBE2I/UBC9 and two SUMO2 molecules via its N-terminus. The most N-terminal region interacts with the SUMO2 chain that is covalently bound to the UBE2I/UBC9 active site, while the second region interacts with another SUMO2 that is non-covalently associated with the same UBE2I/UBC9 chain.</text>
</comment>
<comment type="PTM">
    <text evidence="1">Sumoylated. Predominantly sumoylated on the N-terminal region that is important for interaction with SUMO1 and SUMO2. Sumoylation is important for localization in nuclear granules; desumoylation leads to diffuse nucleoplasmic location. Autosumoylated (in vitro). Sumoylation enhances E3 SUMO-protein ligase activity.</text>
</comment>
<comment type="similarity">
    <text evidence="5">Belongs to the krueppel C2H2-type zinc-finger protein family.</text>
</comment>
<evidence type="ECO:0000250" key="1">
    <source>
        <dbReference type="UniProtKB" id="Q9Y4E5"/>
    </source>
</evidence>
<evidence type="ECO:0000255" key="2">
    <source>
        <dbReference type="PROSITE-ProRule" id="PRU00042"/>
    </source>
</evidence>
<evidence type="ECO:0000256" key="3">
    <source>
        <dbReference type="SAM" id="MobiDB-lite"/>
    </source>
</evidence>
<evidence type="ECO:0000269" key="4">
    <source>
    </source>
</evidence>
<evidence type="ECO:0000305" key="5"/>
<evidence type="ECO:0000305" key="6">
    <source>
    </source>
</evidence>
<reference key="1">
    <citation type="journal article" date="2005" name="Science">
        <title>The transcriptional landscape of the mammalian genome.</title>
        <authorList>
            <person name="Carninci P."/>
            <person name="Kasukawa T."/>
            <person name="Katayama S."/>
            <person name="Gough J."/>
            <person name="Frith M.C."/>
            <person name="Maeda N."/>
            <person name="Oyama R."/>
            <person name="Ravasi T."/>
            <person name="Lenhard B."/>
            <person name="Wells C."/>
            <person name="Kodzius R."/>
            <person name="Shimokawa K."/>
            <person name="Bajic V.B."/>
            <person name="Brenner S.E."/>
            <person name="Batalov S."/>
            <person name="Forrest A.R."/>
            <person name="Zavolan M."/>
            <person name="Davis M.J."/>
            <person name="Wilming L.G."/>
            <person name="Aidinis V."/>
            <person name="Allen J.E."/>
            <person name="Ambesi-Impiombato A."/>
            <person name="Apweiler R."/>
            <person name="Aturaliya R.N."/>
            <person name="Bailey T.L."/>
            <person name="Bansal M."/>
            <person name="Baxter L."/>
            <person name="Beisel K.W."/>
            <person name="Bersano T."/>
            <person name="Bono H."/>
            <person name="Chalk A.M."/>
            <person name="Chiu K.P."/>
            <person name="Choudhary V."/>
            <person name="Christoffels A."/>
            <person name="Clutterbuck D.R."/>
            <person name="Crowe M.L."/>
            <person name="Dalla E."/>
            <person name="Dalrymple B.P."/>
            <person name="de Bono B."/>
            <person name="Della Gatta G."/>
            <person name="di Bernardo D."/>
            <person name="Down T."/>
            <person name="Engstrom P."/>
            <person name="Fagiolini M."/>
            <person name="Faulkner G."/>
            <person name="Fletcher C.F."/>
            <person name="Fukushima T."/>
            <person name="Furuno M."/>
            <person name="Futaki S."/>
            <person name="Gariboldi M."/>
            <person name="Georgii-Hemming P."/>
            <person name="Gingeras T.R."/>
            <person name="Gojobori T."/>
            <person name="Green R.E."/>
            <person name="Gustincich S."/>
            <person name="Harbers M."/>
            <person name="Hayashi Y."/>
            <person name="Hensch T.K."/>
            <person name="Hirokawa N."/>
            <person name="Hill D."/>
            <person name="Huminiecki L."/>
            <person name="Iacono M."/>
            <person name="Ikeo K."/>
            <person name="Iwama A."/>
            <person name="Ishikawa T."/>
            <person name="Jakt M."/>
            <person name="Kanapin A."/>
            <person name="Katoh M."/>
            <person name="Kawasawa Y."/>
            <person name="Kelso J."/>
            <person name="Kitamura H."/>
            <person name="Kitano H."/>
            <person name="Kollias G."/>
            <person name="Krishnan S.P."/>
            <person name="Kruger A."/>
            <person name="Kummerfeld S.K."/>
            <person name="Kurochkin I.V."/>
            <person name="Lareau L.F."/>
            <person name="Lazarevic D."/>
            <person name="Lipovich L."/>
            <person name="Liu J."/>
            <person name="Liuni S."/>
            <person name="McWilliam S."/>
            <person name="Madan Babu M."/>
            <person name="Madera M."/>
            <person name="Marchionni L."/>
            <person name="Matsuda H."/>
            <person name="Matsuzawa S."/>
            <person name="Miki H."/>
            <person name="Mignone F."/>
            <person name="Miyake S."/>
            <person name="Morris K."/>
            <person name="Mottagui-Tabar S."/>
            <person name="Mulder N."/>
            <person name="Nakano N."/>
            <person name="Nakauchi H."/>
            <person name="Ng P."/>
            <person name="Nilsson R."/>
            <person name="Nishiguchi S."/>
            <person name="Nishikawa S."/>
            <person name="Nori F."/>
            <person name="Ohara O."/>
            <person name="Okazaki Y."/>
            <person name="Orlando V."/>
            <person name="Pang K.C."/>
            <person name="Pavan W.J."/>
            <person name="Pavesi G."/>
            <person name="Pesole G."/>
            <person name="Petrovsky N."/>
            <person name="Piazza S."/>
            <person name="Reed J."/>
            <person name="Reid J.F."/>
            <person name="Ring B.Z."/>
            <person name="Ringwald M."/>
            <person name="Rost B."/>
            <person name="Ruan Y."/>
            <person name="Salzberg S.L."/>
            <person name="Sandelin A."/>
            <person name="Schneider C."/>
            <person name="Schoenbach C."/>
            <person name="Sekiguchi K."/>
            <person name="Semple C.A."/>
            <person name="Seno S."/>
            <person name="Sessa L."/>
            <person name="Sheng Y."/>
            <person name="Shibata Y."/>
            <person name="Shimada H."/>
            <person name="Shimada K."/>
            <person name="Silva D."/>
            <person name="Sinclair B."/>
            <person name="Sperling S."/>
            <person name="Stupka E."/>
            <person name="Sugiura K."/>
            <person name="Sultana R."/>
            <person name="Takenaka Y."/>
            <person name="Taki K."/>
            <person name="Tammoja K."/>
            <person name="Tan S.L."/>
            <person name="Tang S."/>
            <person name="Taylor M.S."/>
            <person name="Tegner J."/>
            <person name="Teichmann S.A."/>
            <person name="Ueda H.R."/>
            <person name="van Nimwegen E."/>
            <person name="Verardo R."/>
            <person name="Wei C.L."/>
            <person name="Yagi K."/>
            <person name="Yamanishi H."/>
            <person name="Zabarovsky E."/>
            <person name="Zhu S."/>
            <person name="Zimmer A."/>
            <person name="Hide W."/>
            <person name="Bult C."/>
            <person name="Grimmond S.M."/>
            <person name="Teasdale R.D."/>
            <person name="Liu E.T."/>
            <person name="Brusic V."/>
            <person name="Quackenbush J."/>
            <person name="Wahlestedt C."/>
            <person name="Mattick J.S."/>
            <person name="Hume D.A."/>
            <person name="Kai C."/>
            <person name="Sasaki D."/>
            <person name="Tomaru Y."/>
            <person name="Fukuda S."/>
            <person name="Kanamori-Katayama M."/>
            <person name="Suzuki M."/>
            <person name="Aoki J."/>
            <person name="Arakawa T."/>
            <person name="Iida J."/>
            <person name="Imamura K."/>
            <person name="Itoh M."/>
            <person name="Kato T."/>
            <person name="Kawaji H."/>
            <person name="Kawagashira N."/>
            <person name="Kawashima T."/>
            <person name="Kojima M."/>
            <person name="Kondo S."/>
            <person name="Konno H."/>
            <person name="Nakano K."/>
            <person name="Ninomiya N."/>
            <person name="Nishio T."/>
            <person name="Okada M."/>
            <person name="Plessy C."/>
            <person name="Shibata K."/>
            <person name="Shiraki T."/>
            <person name="Suzuki S."/>
            <person name="Tagami M."/>
            <person name="Waki K."/>
            <person name="Watahiki A."/>
            <person name="Okamura-Oho Y."/>
            <person name="Suzuki H."/>
            <person name="Kawai J."/>
            <person name="Hayashizaki Y."/>
        </authorList>
    </citation>
    <scope>NUCLEOTIDE SEQUENCE [LARGE SCALE MRNA]</scope>
    <source>
        <strain>C57BL/6J</strain>
        <tissue>Testis</tissue>
    </source>
</reference>
<reference key="2">
    <citation type="journal article" date="2015" name="Nat. Struct. Mol. Biol.">
        <title>A new vertebrate SUMO enzyme family reveals insights into SUMO-chain assembly.</title>
        <authorList>
            <person name="Eisenhardt N."/>
            <person name="Chaugule V.K."/>
            <person name="Koidl S."/>
            <person name="Droescher M."/>
            <person name="Dogan E."/>
            <person name="Rettich J."/>
            <person name="Sutinen P."/>
            <person name="Imanishi S.Y."/>
            <person name="Hofmann K."/>
            <person name="Palvimo J.J."/>
            <person name="Pichler A."/>
        </authorList>
    </citation>
    <scope>FUNCTION</scope>
    <scope>CATALYTIC ACTIVITY</scope>
    <scope>PATHWAY</scope>
</reference>
<gene>
    <name type="primary">Znf451</name>
    <name type="synonym">Zfp451</name>
</gene>